<keyword id="KW-0067">ATP-binding</keyword>
<keyword id="KW-1003">Cell membrane</keyword>
<keyword id="KW-0325">Glycoprotein</keyword>
<keyword id="KW-0418">Kinase</keyword>
<keyword id="KW-0433">Leucine-rich repeat</keyword>
<keyword id="KW-0472">Membrane</keyword>
<keyword id="KW-0547">Nucleotide-binding</keyword>
<keyword id="KW-0675">Receptor</keyword>
<keyword id="KW-1185">Reference proteome</keyword>
<keyword id="KW-0677">Repeat</keyword>
<keyword id="KW-0723">Serine/threonine-protein kinase</keyword>
<keyword id="KW-0732">Signal</keyword>
<keyword id="KW-0808">Transferase</keyword>
<keyword id="KW-0812">Transmembrane</keyword>
<keyword id="KW-1133">Transmembrane helix</keyword>
<sequence>MIPPNINVLIRSICINLVTSLPLNFAYIFIHFAVNALREIKRSLIDPMRNLSNWAKGDPCNSNWTGIICFGRSHNDGHFHVRELQLMRLNLSGELAPEVGQLLYLEILDVMWNNLTGRIPLEIGRISSLKLLLLNGNKFTGSLPPELGNLQNLNRLQVDENNITGSVPFSFGNLRSIKHLHLNNNTISGEIPVELSKLPKLVHMILDNNNLTGTLPLELAQLPSLTILQLDNNNFEGSTIPEAYGHFSRLVKLSLRNCGLQGSIPDLSRIENLSYLDLSWNHLTGTIPESKLSDNMTTIELSYNHLTGSIPQSFSDLNSLQLLSLENNSLSGSVPTEIWQDKSFENNKLQVYDLNNNFSDATGNLRTPDNVTLYLRGNPICKSTSIPMVTQFFEYICGEKKQTSTNSNTPCSNVSCPFENVKVSPGICLCTAPLSIDYRLKSPSFFFFTPYIERQFREYITSSLQLETHQLAIDRLVDENRLRPRMYLKLVPKGRITFNKSEVIRIRDRFMSWSFNKTDFFGPYELLDFPLQGPYADLLAQTSGIRTIVWMMIVAGSVVAATVLSVTATLLYVRKRRENSHTLTKKRVFRTISREIKGVKKFSFVELSDATNGFDSSTLIGRGSYGKVYKGILSNKTEVAIKRGEETSLQSEKEFLNEIDLLSRLHHRNLVSLIGYSSDIGEQMLVYEYMPNGNVRDWLSANAADTLSFSMRSHVALGSAKGILYLHTEANPPVIHRDIKTSNILLDCQLHAKVADFGLSRLAPAFGEGDGEPAHVSTVVRGTPGYLDPEYFMTQQLTVRSDVYSFGVVLLELLTGMHPFFEGTHIIREVRTANECGTVLSVADSRMGQCSPDKVKKLAELALWCCEDRPETRPPMSKVVKELEGICQSVREPEMFSETTKLLCSKTSPSSSSVPSPLSLLPGSNLDSGFFHAVKPR</sequence>
<dbReference type="EC" id="2.7.11.1"/>
<dbReference type="EMBL" id="AL132966">
    <property type="protein sequence ID" value="CAB67666.1"/>
    <property type="status" value="ALT_SEQ"/>
    <property type="molecule type" value="Genomic_DNA"/>
</dbReference>
<dbReference type="EMBL" id="CP002686">
    <property type="status" value="NOT_ANNOTATED_CDS"/>
    <property type="molecule type" value="Genomic_DNA"/>
</dbReference>
<dbReference type="PIR" id="T45899">
    <property type="entry name" value="T45899"/>
</dbReference>
<dbReference type="SMR" id="Q9LFG1"/>
<dbReference type="BioGRID" id="9844">
    <property type="interactions" value="17"/>
</dbReference>
<dbReference type="IntAct" id="Q9LFG1">
    <property type="interactions" value="21"/>
</dbReference>
<dbReference type="STRING" id="3702.Q9LFG1"/>
<dbReference type="GlyGen" id="Q9LFG1">
    <property type="glycosylation" value="15 sites"/>
</dbReference>
<dbReference type="Araport" id="AT3G53590"/>
<dbReference type="TAIR" id="AT3G53590"/>
<dbReference type="InParanoid" id="Q9LFG1"/>
<dbReference type="PhylomeDB" id="Q9LFG1"/>
<dbReference type="PRO" id="PR:Q9LFG1"/>
<dbReference type="Proteomes" id="UP000006548">
    <property type="component" value="Chromosome 3"/>
</dbReference>
<dbReference type="ExpressionAtlas" id="Q9LFG1">
    <property type="expression patterns" value="baseline and differential"/>
</dbReference>
<dbReference type="GO" id="GO:0005886">
    <property type="term" value="C:plasma membrane"/>
    <property type="evidence" value="ECO:0007669"/>
    <property type="project" value="UniProtKB-SubCell"/>
</dbReference>
<dbReference type="GO" id="GO:0005524">
    <property type="term" value="F:ATP binding"/>
    <property type="evidence" value="ECO:0007669"/>
    <property type="project" value="UniProtKB-KW"/>
</dbReference>
<dbReference type="GO" id="GO:0106310">
    <property type="term" value="F:protein serine kinase activity"/>
    <property type="evidence" value="ECO:0007669"/>
    <property type="project" value="RHEA"/>
</dbReference>
<dbReference type="GO" id="GO:0004674">
    <property type="term" value="F:protein serine/threonine kinase activity"/>
    <property type="evidence" value="ECO:0007669"/>
    <property type="project" value="UniProtKB-KW"/>
</dbReference>
<dbReference type="FunFam" id="1.10.510.10:FF:000453">
    <property type="entry name" value="LRR receptor-like serine/threonine-protein kinase HSL2"/>
    <property type="match status" value="1"/>
</dbReference>
<dbReference type="FunFam" id="3.80.10.10:FF:000387">
    <property type="entry name" value="Probable LRR receptor-like serine/threonine-protein kinase At1g06840"/>
    <property type="match status" value="1"/>
</dbReference>
<dbReference type="FunFam" id="3.30.200.20:FF:000039">
    <property type="entry name" value="receptor-like protein kinase FERONIA"/>
    <property type="match status" value="1"/>
</dbReference>
<dbReference type="Gene3D" id="3.30.200.20">
    <property type="entry name" value="Phosphorylase Kinase, domain 1"/>
    <property type="match status" value="1"/>
</dbReference>
<dbReference type="Gene3D" id="3.80.10.10">
    <property type="entry name" value="Ribonuclease Inhibitor"/>
    <property type="match status" value="3"/>
</dbReference>
<dbReference type="Gene3D" id="1.10.510.10">
    <property type="entry name" value="Transferase(Phosphotransferase) domain 1"/>
    <property type="match status" value="1"/>
</dbReference>
<dbReference type="InterPro" id="IPR011009">
    <property type="entry name" value="Kinase-like_dom_sf"/>
</dbReference>
<dbReference type="InterPro" id="IPR001611">
    <property type="entry name" value="Leu-rich_rpt"/>
</dbReference>
<dbReference type="InterPro" id="IPR003591">
    <property type="entry name" value="Leu-rich_rpt_typical-subtyp"/>
</dbReference>
<dbReference type="InterPro" id="IPR032675">
    <property type="entry name" value="LRR_dom_sf"/>
</dbReference>
<dbReference type="InterPro" id="IPR013210">
    <property type="entry name" value="LRR_N_plant-typ"/>
</dbReference>
<dbReference type="InterPro" id="IPR000719">
    <property type="entry name" value="Prot_kinase_dom"/>
</dbReference>
<dbReference type="InterPro" id="IPR017441">
    <property type="entry name" value="Protein_kinase_ATP_BS"/>
</dbReference>
<dbReference type="InterPro" id="IPR001245">
    <property type="entry name" value="Ser-Thr/Tyr_kinase_cat_dom"/>
</dbReference>
<dbReference type="InterPro" id="IPR008271">
    <property type="entry name" value="Ser/Thr_kinase_AS"/>
</dbReference>
<dbReference type="PANTHER" id="PTHR45974:SF216">
    <property type="entry name" value="PROTEIN KINASE DOMAIN-CONTAINING PROTEIN"/>
    <property type="match status" value="1"/>
</dbReference>
<dbReference type="PANTHER" id="PTHR45974">
    <property type="entry name" value="RECEPTOR-LIKE PROTEIN 55"/>
    <property type="match status" value="1"/>
</dbReference>
<dbReference type="Pfam" id="PF00560">
    <property type="entry name" value="LRR_1"/>
    <property type="match status" value="1"/>
</dbReference>
<dbReference type="Pfam" id="PF13855">
    <property type="entry name" value="LRR_8"/>
    <property type="match status" value="2"/>
</dbReference>
<dbReference type="Pfam" id="PF08263">
    <property type="entry name" value="LRRNT_2"/>
    <property type="match status" value="1"/>
</dbReference>
<dbReference type="Pfam" id="PF07714">
    <property type="entry name" value="PK_Tyr_Ser-Thr"/>
    <property type="match status" value="1"/>
</dbReference>
<dbReference type="SMART" id="SM00369">
    <property type="entry name" value="LRR_TYP"/>
    <property type="match status" value="5"/>
</dbReference>
<dbReference type="SMART" id="SM00220">
    <property type="entry name" value="S_TKc"/>
    <property type="match status" value="1"/>
</dbReference>
<dbReference type="SUPFAM" id="SSF52058">
    <property type="entry name" value="L domain-like"/>
    <property type="match status" value="1"/>
</dbReference>
<dbReference type="SUPFAM" id="SSF56112">
    <property type="entry name" value="Protein kinase-like (PK-like)"/>
    <property type="match status" value="1"/>
</dbReference>
<dbReference type="PROSITE" id="PS51450">
    <property type="entry name" value="LRR"/>
    <property type="match status" value="7"/>
</dbReference>
<dbReference type="PROSITE" id="PS00107">
    <property type="entry name" value="PROTEIN_KINASE_ATP"/>
    <property type="match status" value="1"/>
</dbReference>
<dbReference type="PROSITE" id="PS50011">
    <property type="entry name" value="PROTEIN_KINASE_DOM"/>
    <property type="match status" value="1"/>
</dbReference>
<dbReference type="PROSITE" id="PS00108">
    <property type="entry name" value="PROTEIN_KINASE_ST"/>
    <property type="match status" value="1"/>
</dbReference>
<feature type="signal peptide" evidence="2">
    <location>
        <begin position="1"/>
        <end position="20"/>
    </location>
</feature>
<feature type="chain" id="PRO_0000403350" description="Putative leucine-rich repeat receptor-like serine/threonine-protein kinase At3g53590">
    <location>
        <begin position="21"/>
        <end position="937"/>
    </location>
</feature>
<feature type="topological domain" description="Extracellular" evidence="2">
    <location>
        <begin position="21"/>
        <end position="547"/>
    </location>
</feature>
<feature type="transmembrane region" description="Helical" evidence="2">
    <location>
        <begin position="548"/>
        <end position="568"/>
    </location>
</feature>
<feature type="topological domain" description="Cytoplasmic" evidence="2">
    <location>
        <begin position="569"/>
        <end position="937"/>
    </location>
</feature>
<feature type="repeat" description="LRR 1">
    <location>
        <begin position="102"/>
        <end position="126"/>
    </location>
</feature>
<feature type="repeat" description="LRR 2">
    <location>
        <begin position="127"/>
        <end position="150"/>
    </location>
</feature>
<feature type="repeat" description="LRR 3">
    <location>
        <begin position="152"/>
        <end position="173"/>
    </location>
</feature>
<feature type="repeat" description="LRR 4">
    <location>
        <begin position="174"/>
        <end position="198"/>
    </location>
</feature>
<feature type="repeat" description="LRR 5">
    <location>
        <begin position="200"/>
        <end position="222"/>
    </location>
</feature>
<feature type="repeat" description="LRR 6">
    <location>
        <begin position="223"/>
        <end position="249"/>
    </location>
</feature>
<feature type="repeat" description="LRR 7">
    <location>
        <begin position="251"/>
        <end position="270"/>
    </location>
</feature>
<feature type="repeat" description="LRR 8">
    <location>
        <begin position="271"/>
        <end position="294"/>
    </location>
</feature>
<feature type="repeat" description="LRR 9">
    <location>
        <begin position="296"/>
        <end position="316"/>
    </location>
</feature>
<feature type="repeat" description="LRR 10">
    <location>
        <begin position="317"/>
        <end position="341"/>
    </location>
</feature>
<feature type="repeat" description="LRR 11">
    <location>
        <begin position="343"/>
        <end position="360"/>
    </location>
</feature>
<feature type="domain" description="Protein kinase" evidence="3">
    <location>
        <begin position="614"/>
        <end position="886"/>
    </location>
</feature>
<feature type="active site" description="Proton acceptor" evidence="3 4">
    <location>
        <position position="738"/>
    </location>
</feature>
<feature type="binding site" evidence="3">
    <location>
        <begin position="620"/>
        <end position="628"/>
    </location>
    <ligand>
        <name>ATP</name>
        <dbReference type="ChEBI" id="CHEBI:30616"/>
    </ligand>
</feature>
<feature type="binding site" evidence="3">
    <location>
        <position position="642"/>
    </location>
    <ligand>
        <name>ATP</name>
        <dbReference type="ChEBI" id="CHEBI:30616"/>
    </ligand>
</feature>
<feature type="glycosylation site" description="N-linked (GlcNAc...) asparagine" evidence="2">
    <location>
        <position position="50"/>
    </location>
</feature>
<feature type="glycosylation site" description="N-linked (GlcNAc...) asparagine" evidence="2">
    <location>
        <position position="63"/>
    </location>
</feature>
<feature type="glycosylation site" description="N-linked (GlcNAc...) asparagine" evidence="2">
    <location>
        <position position="90"/>
    </location>
</feature>
<feature type="glycosylation site" description="N-linked (GlcNAc...) asparagine" evidence="2">
    <location>
        <position position="114"/>
    </location>
</feature>
<feature type="glycosylation site" description="N-linked (GlcNAc...) asparagine" evidence="2">
    <location>
        <position position="162"/>
    </location>
</feature>
<feature type="glycosylation site" description="N-linked (GlcNAc...) asparagine" evidence="2">
    <location>
        <position position="184"/>
    </location>
</feature>
<feature type="glycosylation site" description="N-linked (GlcNAc...) asparagine" evidence="2">
    <location>
        <position position="210"/>
    </location>
</feature>
<feature type="glycosylation site" description="N-linked (GlcNAc...) asparagine" evidence="2">
    <location>
        <position position="272"/>
    </location>
</feature>
<feature type="glycosylation site" description="N-linked (GlcNAc...) asparagine" evidence="2">
    <location>
        <position position="295"/>
    </location>
</feature>
<feature type="glycosylation site" description="N-linked (GlcNAc...) asparagine" evidence="2">
    <location>
        <position position="327"/>
    </location>
</feature>
<feature type="glycosylation site" description="N-linked (GlcNAc...) asparagine" evidence="2">
    <location>
        <position position="357"/>
    </location>
</feature>
<feature type="glycosylation site" description="N-linked (GlcNAc...) asparagine" evidence="2">
    <location>
        <position position="370"/>
    </location>
</feature>
<feature type="glycosylation site" description="N-linked (GlcNAc...) asparagine" evidence="2">
    <location>
        <position position="413"/>
    </location>
</feature>
<feature type="glycosylation site" description="N-linked (GlcNAc...) asparagine" evidence="2">
    <location>
        <position position="499"/>
    </location>
</feature>
<feature type="glycosylation site" description="N-linked (GlcNAc...) asparagine" evidence="2">
    <location>
        <position position="516"/>
    </location>
</feature>
<gene>
    <name type="ordered locus">At3g53590</name>
    <name type="ORF">F4P12.290</name>
</gene>
<accession>Q9LFG1</accession>
<accession>F4JAH5</accession>
<protein>
    <recommendedName>
        <fullName>Putative leucine-rich repeat receptor-like serine/threonine-protein kinase At3g53590</fullName>
        <ecNumber>2.7.11.1</ecNumber>
    </recommendedName>
</protein>
<proteinExistence type="evidence at protein level"/>
<name>Y3359_ARATH</name>
<comment type="catalytic activity">
    <reaction>
        <text>L-seryl-[protein] + ATP = O-phospho-L-seryl-[protein] + ADP + H(+)</text>
        <dbReference type="Rhea" id="RHEA:17989"/>
        <dbReference type="Rhea" id="RHEA-COMP:9863"/>
        <dbReference type="Rhea" id="RHEA-COMP:11604"/>
        <dbReference type="ChEBI" id="CHEBI:15378"/>
        <dbReference type="ChEBI" id="CHEBI:29999"/>
        <dbReference type="ChEBI" id="CHEBI:30616"/>
        <dbReference type="ChEBI" id="CHEBI:83421"/>
        <dbReference type="ChEBI" id="CHEBI:456216"/>
        <dbReference type="EC" id="2.7.11.1"/>
    </reaction>
</comment>
<comment type="catalytic activity">
    <reaction>
        <text>L-threonyl-[protein] + ATP = O-phospho-L-threonyl-[protein] + ADP + H(+)</text>
        <dbReference type="Rhea" id="RHEA:46608"/>
        <dbReference type="Rhea" id="RHEA-COMP:11060"/>
        <dbReference type="Rhea" id="RHEA-COMP:11605"/>
        <dbReference type="ChEBI" id="CHEBI:15378"/>
        <dbReference type="ChEBI" id="CHEBI:30013"/>
        <dbReference type="ChEBI" id="CHEBI:30616"/>
        <dbReference type="ChEBI" id="CHEBI:61977"/>
        <dbReference type="ChEBI" id="CHEBI:456216"/>
        <dbReference type="EC" id="2.7.11.1"/>
    </reaction>
</comment>
<comment type="interaction">
    <interactant intactId="EBI-20664191">
        <id>Q9LFG1</id>
    </interactant>
    <interactant intactId="EBI-1799448">
        <id>Q9FL28</id>
        <label>FLS2</label>
    </interactant>
    <organismsDiffer>false</organismsDiffer>
    <experiments>3</experiments>
</comment>
<comment type="interaction">
    <interactant intactId="EBI-20664191">
        <id>Q9LFG1</id>
    </interactant>
    <interactant intactId="EBI-16146189">
        <id>Q9LFS4</id>
        <label>NIK1</label>
    </interactant>
    <organismsDiffer>false</organismsDiffer>
    <experiments>3</experiments>
</comment>
<comment type="interaction">
    <interactant intactId="EBI-20664191">
        <id>Q9LFG1</id>
    </interactant>
    <interactant intactId="EBI-16914444">
        <id>Q9LJY0</id>
        <label>PRK4</label>
    </interactant>
    <organismsDiffer>false</organismsDiffer>
    <experiments>2</experiments>
</comment>
<comment type="interaction">
    <interactant intactId="EBI-20664191">
        <id>Q9LFG1</id>
    </interactant>
    <interactant intactId="EBI-1626936">
        <id>Q9LVI6</id>
        <label>RLK902</label>
    </interactant>
    <organismsDiffer>false</organismsDiffer>
    <experiments>3</experiments>
</comment>
<comment type="subcellular location">
    <subcellularLocation>
        <location evidence="1">Cell membrane</location>
        <topology evidence="1">Single-pass membrane protein</topology>
    </subcellularLocation>
</comment>
<comment type="similarity">
    <text evidence="3">Belongs to the protein kinase superfamily. Ser/Thr protein kinase family.</text>
</comment>
<comment type="sequence caution" evidence="5">
    <conflict type="erroneous gene model prediction">
        <sequence resource="EMBL-CDS" id="CAB67666"/>
    </conflict>
</comment>
<organism>
    <name type="scientific">Arabidopsis thaliana</name>
    <name type="common">Mouse-ear cress</name>
    <dbReference type="NCBI Taxonomy" id="3702"/>
    <lineage>
        <taxon>Eukaryota</taxon>
        <taxon>Viridiplantae</taxon>
        <taxon>Streptophyta</taxon>
        <taxon>Embryophyta</taxon>
        <taxon>Tracheophyta</taxon>
        <taxon>Spermatophyta</taxon>
        <taxon>Magnoliopsida</taxon>
        <taxon>eudicotyledons</taxon>
        <taxon>Gunneridae</taxon>
        <taxon>Pentapetalae</taxon>
        <taxon>rosids</taxon>
        <taxon>malvids</taxon>
        <taxon>Brassicales</taxon>
        <taxon>Brassicaceae</taxon>
        <taxon>Camelineae</taxon>
        <taxon>Arabidopsis</taxon>
    </lineage>
</organism>
<evidence type="ECO:0000250" key="1"/>
<evidence type="ECO:0000255" key="2"/>
<evidence type="ECO:0000255" key="3">
    <source>
        <dbReference type="PROSITE-ProRule" id="PRU00159"/>
    </source>
</evidence>
<evidence type="ECO:0000255" key="4">
    <source>
        <dbReference type="PROSITE-ProRule" id="PRU10027"/>
    </source>
</evidence>
<evidence type="ECO:0000305" key="5"/>
<reference key="1">
    <citation type="journal article" date="2000" name="Nature">
        <title>Sequence and analysis of chromosome 3 of the plant Arabidopsis thaliana.</title>
        <authorList>
            <person name="Salanoubat M."/>
            <person name="Lemcke K."/>
            <person name="Rieger M."/>
            <person name="Ansorge W."/>
            <person name="Unseld M."/>
            <person name="Fartmann B."/>
            <person name="Valle G."/>
            <person name="Bloecker H."/>
            <person name="Perez-Alonso M."/>
            <person name="Obermaier B."/>
            <person name="Delseny M."/>
            <person name="Boutry M."/>
            <person name="Grivell L.A."/>
            <person name="Mache R."/>
            <person name="Puigdomenech P."/>
            <person name="De Simone V."/>
            <person name="Choisne N."/>
            <person name="Artiguenave F."/>
            <person name="Robert C."/>
            <person name="Brottier P."/>
            <person name="Wincker P."/>
            <person name="Cattolico L."/>
            <person name="Weissenbach J."/>
            <person name="Saurin W."/>
            <person name="Quetier F."/>
            <person name="Schaefer M."/>
            <person name="Mueller-Auer S."/>
            <person name="Gabel C."/>
            <person name="Fuchs M."/>
            <person name="Benes V."/>
            <person name="Wurmbach E."/>
            <person name="Drzonek H."/>
            <person name="Erfle H."/>
            <person name="Jordan N."/>
            <person name="Bangert S."/>
            <person name="Wiedelmann R."/>
            <person name="Kranz H."/>
            <person name="Voss H."/>
            <person name="Holland R."/>
            <person name="Brandt P."/>
            <person name="Nyakatura G."/>
            <person name="Vezzi A."/>
            <person name="D'Angelo M."/>
            <person name="Pallavicini A."/>
            <person name="Toppo S."/>
            <person name="Simionati B."/>
            <person name="Conrad A."/>
            <person name="Hornischer K."/>
            <person name="Kauer G."/>
            <person name="Loehnert T.-H."/>
            <person name="Nordsiek G."/>
            <person name="Reichelt J."/>
            <person name="Scharfe M."/>
            <person name="Schoen O."/>
            <person name="Bargues M."/>
            <person name="Terol J."/>
            <person name="Climent J."/>
            <person name="Navarro P."/>
            <person name="Collado C."/>
            <person name="Perez-Perez A."/>
            <person name="Ottenwaelder B."/>
            <person name="Duchemin D."/>
            <person name="Cooke R."/>
            <person name="Laudie M."/>
            <person name="Berger-Llauro C."/>
            <person name="Purnelle B."/>
            <person name="Masuy D."/>
            <person name="de Haan M."/>
            <person name="Maarse A.C."/>
            <person name="Alcaraz J.-P."/>
            <person name="Cottet A."/>
            <person name="Casacuberta E."/>
            <person name="Monfort A."/>
            <person name="Argiriou A."/>
            <person name="Flores M."/>
            <person name="Liguori R."/>
            <person name="Vitale D."/>
            <person name="Mannhaupt G."/>
            <person name="Haase D."/>
            <person name="Schoof H."/>
            <person name="Rudd S."/>
            <person name="Zaccaria P."/>
            <person name="Mewes H.-W."/>
            <person name="Mayer K.F.X."/>
            <person name="Kaul S."/>
            <person name="Town C.D."/>
            <person name="Koo H.L."/>
            <person name="Tallon L.J."/>
            <person name="Jenkins J."/>
            <person name="Rooney T."/>
            <person name="Rizzo M."/>
            <person name="Walts A."/>
            <person name="Utterback T."/>
            <person name="Fujii C.Y."/>
            <person name="Shea T.P."/>
            <person name="Creasy T.H."/>
            <person name="Haas B."/>
            <person name="Maiti R."/>
            <person name="Wu D."/>
            <person name="Peterson J."/>
            <person name="Van Aken S."/>
            <person name="Pai G."/>
            <person name="Militscher J."/>
            <person name="Sellers P."/>
            <person name="Gill J.E."/>
            <person name="Feldblyum T.V."/>
            <person name="Preuss D."/>
            <person name="Lin X."/>
            <person name="Nierman W.C."/>
            <person name="Salzberg S.L."/>
            <person name="White O."/>
            <person name="Venter J.C."/>
            <person name="Fraser C.M."/>
            <person name="Kaneko T."/>
            <person name="Nakamura Y."/>
            <person name="Sato S."/>
            <person name="Kato T."/>
            <person name="Asamizu E."/>
            <person name="Sasamoto S."/>
            <person name="Kimura T."/>
            <person name="Idesawa K."/>
            <person name="Kawashima K."/>
            <person name="Kishida Y."/>
            <person name="Kiyokawa C."/>
            <person name="Kohara M."/>
            <person name="Matsumoto M."/>
            <person name="Matsuno A."/>
            <person name="Muraki A."/>
            <person name="Nakayama S."/>
            <person name="Nakazaki N."/>
            <person name="Shinpo S."/>
            <person name="Takeuchi C."/>
            <person name="Wada T."/>
            <person name="Watanabe A."/>
            <person name="Yamada M."/>
            <person name="Yasuda M."/>
            <person name="Tabata S."/>
        </authorList>
    </citation>
    <scope>NUCLEOTIDE SEQUENCE [LARGE SCALE GENOMIC DNA]</scope>
    <source>
        <strain>cv. Columbia</strain>
    </source>
</reference>
<reference key="2">
    <citation type="journal article" date="2017" name="Plant J.">
        <title>Araport11: a complete reannotation of the Arabidopsis thaliana reference genome.</title>
        <authorList>
            <person name="Cheng C.Y."/>
            <person name="Krishnakumar V."/>
            <person name="Chan A.P."/>
            <person name="Thibaud-Nissen F."/>
            <person name="Schobel S."/>
            <person name="Town C.D."/>
        </authorList>
    </citation>
    <scope>GENOME REANNOTATION</scope>
    <source>
        <strain>cv. Columbia</strain>
    </source>
</reference>